<proteinExistence type="inferred from homology"/>
<comment type="function">
    <text>Essential for piliation.</text>
</comment>
<comment type="subcellular location">
    <subcellularLocation>
        <location evidence="1">Cell outer membrane</location>
        <topology evidence="1">Multi-pass membrane protein</topology>
    </subcellularLocation>
</comment>
<comment type="similarity">
    <text evidence="3">Belongs to the fimbrial export usher family.</text>
</comment>
<comment type="caution">
    <text evidence="3">It is uncertain whether Met-1 or Met-97 is the initiator.</text>
</comment>
<comment type="sequence caution" evidence="3">
    <conflict type="erroneous initiation">
        <sequence resource="EMBL-CDS" id="AAA61816"/>
    </conflict>
</comment>
<reference key="1">
    <citation type="submission" date="1995-01" db="EMBL/GenBank/DDBJ databases">
        <authorList>
            <person name="Green B.A."/>
            <person name="Olmsted S.B."/>
        </authorList>
    </citation>
    <scope>NUCLEOTIDE SEQUENCE [GENOMIC DNA]</scope>
    <source>
        <strain>86-0295 / LKP serotype 1</strain>
    </source>
</reference>
<sequence length="837" mass="92766">MKTKIFPLNKIAFACSLLLANPLAWAGDQFDASLWGDGSVLGVDFARFNVKNAVLPGRYEAQIYVKFEEKGVSDIIFADNPATGRTELCFTPKLQEMLDLMDEAIVKSPNSEDDTCVFASDAIPKGTFEYQSGEMKLKLELPQALTIRRPRGYIAPSRWQTGTNAAFANYDINYYRSGNPEVKSESLYVGLRSGVNFGNWALRHSGSFSRFENQSSSGFTDKGKNHYERGDTYLQRDFALLRGNVTVGDFFSTARIGENFGMRGLRIASDDRMLAPSQRGFAPVVRGVANTNAKVSIKQNGYTIYQITVPAGPFVINDLYASGYSGDLTVEIQESDGKVRSFIVPFSNLAPLMRVGHLRYQLAGGRYRIDSRTFDERVLQGVLQYGLTNHLTLNSSLLYTRHYRAGLFGFGLNTPIGAFSADATWSHAEFPLKHVSKNGYSLHGSYSINFNESGTNITLAAYRYSSRDFYTLSDTIGLNRTFRQFSGAYLPEIYRPKNQFQVSLSQSLGNWGNLYLSGQTYNYWEKRGTNTQYQVAYSNSFHILNYSVNLSQSIDKETGKRDNSIYLSLSLPLGDNHSADSSYSRSGNDINQRLGVNGSFGERHQWSYGINASRNNQGYRSYDGNLSHNNSIGSYRASYSRDSLKNRSISLGASGAVVAHKHGITLSQPVGESFAIIHAKDAAGAKVESGANVSLDYFGNAVMPYTSPYEINYIGINPSDAEANVEFEATERQIIPRANSISLVDFRTGKNTMVLFNLTLPNGEPVPMASTAQDSEGAFVGDVVQGGVLFANKLTQPKGELIVKWGERESEQCRFQYQVDLDNAQIQSHDIQCKTAK</sequence>
<organism>
    <name type="scientific">Haemophilus influenzae</name>
    <dbReference type="NCBI Taxonomy" id="727"/>
    <lineage>
        <taxon>Bacteria</taxon>
        <taxon>Pseudomonadati</taxon>
        <taxon>Pseudomonadota</taxon>
        <taxon>Gammaproteobacteria</taxon>
        <taxon>Pasteurellales</taxon>
        <taxon>Pasteurellaceae</taxon>
        <taxon>Haemophilus</taxon>
    </lineage>
</organism>
<gene>
    <name type="primary">hifC</name>
</gene>
<dbReference type="EMBL" id="U19730">
    <property type="protein sequence ID" value="AAA61816.1"/>
    <property type="status" value="ALT_INIT"/>
    <property type="molecule type" value="Genomic_DNA"/>
</dbReference>
<dbReference type="SMR" id="P45998"/>
<dbReference type="GO" id="GO:0009279">
    <property type="term" value="C:cell outer membrane"/>
    <property type="evidence" value="ECO:0007669"/>
    <property type="project" value="UniProtKB-SubCell"/>
</dbReference>
<dbReference type="GO" id="GO:0015473">
    <property type="term" value="F:fimbrial usher porin activity"/>
    <property type="evidence" value="ECO:0007669"/>
    <property type="project" value="InterPro"/>
</dbReference>
<dbReference type="GO" id="GO:0009297">
    <property type="term" value="P:pilus assembly"/>
    <property type="evidence" value="ECO:0007669"/>
    <property type="project" value="InterPro"/>
</dbReference>
<dbReference type="FunFam" id="2.60.40.3110:FF:000001">
    <property type="entry name" value="Putative fimbrial outer membrane usher"/>
    <property type="match status" value="1"/>
</dbReference>
<dbReference type="Gene3D" id="2.60.40.2070">
    <property type="match status" value="1"/>
</dbReference>
<dbReference type="Gene3D" id="2.60.40.3110">
    <property type="match status" value="1"/>
</dbReference>
<dbReference type="Gene3D" id="3.10.20.410">
    <property type="match status" value="1"/>
</dbReference>
<dbReference type="Gene3D" id="2.60.40.2610">
    <property type="entry name" value="Outer membrane usher protein FimD, plug domain"/>
    <property type="match status" value="1"/>
</dbReference>
<dbReference type="InterPro" id="IPR000015">
    <property type="entry name" value="Fimb_usher"/>
</dbReference>
<dbReference type="InterPro" id="IPR018030">
    <property type="entry name" value="Fimbrial_membr_usher_CS"/>
</dbReference>
<dbReference type="InterPro" id="IPR042186">
    <property type="entry name" value="FimD_plug_dom"/>
</dbReference>
<dbReference type="InterPro" id="IPR025949">
    <property type="entry name" value="PapC-like_C"/>
</dbReference>
<dbReference type="InterPro" id="IPR043142">
    <property type="entry name" value="PapC-like_C_sf"/>
</dbReference>
<dbReference type="InterPro" id="IPR025885">
    <property type="entry name" value="PapC_N"/>
</dbReference>
<dbReference type="InterPro" id="IPR037224">
    <property type="entry name" value="PapC_N_sf"/>
</dbReference>
<dbReference type="PANTHER" id="PTHR30451">
    <property type="entry name" value="OUTER MEMBRANE USHER PROTEIN"/>
    <property type="match status" value="1"/>
</dbReference>
<dbReference type="PANTHER" id="PTHR30451:SF5">
    <property type="entry name" value="SLR0019 PROTEIN"/>
    <property type="match status" value="1"/>
</dbReference>
<dbReference type="Pfam" id="PF13953">
    <property type="entry name" value="PapC_C"/>
    <property type="match status" value="1"/>
</dbReference>
<dbReference type="Pfam" id="PF13954">
    <property type="entry name" value="PapC_N"/>
    <property type="match status" value="1"/>
</dbReference>
<dbReference type="Pfam" id="PF00577">
    <property type="entry name" value="Usher"/>
    <property type="match status" value="1"/>
</dbReference>
<dbReference type="SUPFAM" id="SSF141729">
    <property type="entry name" value="FimD N-terminal domain-like"/>
    <property type="match status" value="1"/>
</dbReference>
<dbReference type="PROSITE" id="PS01151">
    <property type="entry name" value="FIMBRIAL_USHER"/>
    <property type="match status" value="1"/>
</dbReference>
<accession>P45998</accession>
<keyword id="KW-0998">Cell outer membrane</keyword>
<keyword id="KW-1015">Disulfide bond</keyword>
<keyword id="KW-1029">Fimbrium biogenesis</keyword>
<keyword id="KW-0472">Membrane</keyword>
<keyword id="KW-0732">Signal</keyword>
<keyword id="KW-0812">Transmembrane</keyword>
<keyword id="KW-1134">Transmembrane beta strand</keyword>
<keyword id="KW-0813">Transport</keyword>
<feature type="signal peptide" evidence="2">
    <location>
        <begin position="1"/>
        <end position="26"/>
    </location>
</feature>
<feature type="chain" id="PRO_0000009318" description="Outer membrane usher protein HifC">
    <location>
        <begin position="27"/>
        <end position="837"/>
    </location>
</feature>
<feature type="disulfide bond" evidence="2">
    <location>
        <begin position="813"/>
        <end position="833"/>
    </location>
</feature>
<name>HIFC3_HAEIF</name>
<protein>
    <recommendedName>
        <fullName>Outer membrane usher protein HifC</fullName>
    </recommendedName>
</protein>
<evidence type="ECO:0000250" key="1"/>
<evidence type="ECO:0000255" key="2"/>
<evidence type="ECO:0000305" key="3"/>